<feature type="chain" id="PRO_0000360428" description="Sperm-associated antigen 7 homolog">
    <location>
        <begin position="1"/>
        <end position="230"/>
    </location>
</feature>
<feature type="domain" description="R3H" evidence="1">
    <location>
        <begin position="46"/>
        <end position="109"/>
    </location>
</feature>
<feature type="region of interest" description="Disordered" evidence="2">
    <location>
        <begin position="1"/>
        <end position="45"/>
    </location>
</feature>
<feature type="region of interest" description="Disordered" evidence="2">
    <location>
        <begin position="119"/>
        <end position="169"/>
    </location>
</feature>
<feature type="region of interest" description="Disordered" evidence="2">
    <location>
        <begin position="185"/>
        <end position="230"/>
    </location>
</feature>
<feature type="compositionally biased region" description="Basic and acidic residues" evidence="2">
    <location>
        <begin position="16"/>
        <end position="45"/>
    </location>
</feature>
<feature type="compositionally biased region" description="Basic and acidic residues" evidence="2">
    <location>
        <begin position="119"/>
        <end position="144"/>
    </location>
</feature>
<feature type="compositionally biased region" description="Basic and acidic residues" evidence="2">
    <location>
        <begin position="196"/>
        <end position="211"/>
    </location>
</feature>
<feature type="modified residue" description="Phosphoserine" evidence="3">
    <location>
        <position position="158"/>
    </location>
</feature>
<organism>
    <name type="scientific">Danio rerio</name>
    <name type="common">Zebrafish</name>
    <name type="synonym">Brachydanio rerio</name>
    <dbReference type="NCBI Taxonomy" id="7955"/>
    <lineage>
        <taxon>Eukaryota</taxon>
        <taxon>Metazoa</taxon>
        <taxon>Chordata</taxon>
        <taxon>Craniata</taxon>
        <taxon>Vertebrata</taxon>
        <taxon>Euteleostomi</taxon>
        <taxon>Actinopterygii</taxon>
        <taxon>Neopterygii</taxon>
        <taxon>Teleostei</taxon>
        <taxon>Ostariophysi</taxon>
        <taxon>Cypriniformes</taxon>
        <taxon>Danionidae</taxon>
        <taxon>Danioninae</taxon>
        <taxon>Danio</taxon>
    </lineage>
</organism>
<name>SPAG7_DANRE</name>
<proteinExistence type="evidence at protein level"/>
<accession>Q7SYJ9</accession>
<dbReference type="EMBL" id="BC054697">
    <property type="protein sequence ID" value="AAH54697.1"/>
    <property type="molecule type" value="mRNA"/>
</dbReference>
<dbReference type="RefSeq" id="NP_957419.1">
    <property type="nucleotide sequence ID" value="NM_201125.1"/>
</dbReference>
<dbReference type="SMR" id="Q7SYJ9"/>
<dbReference type="FunCoup" id="Q7SYJ9">
    <property type="interactions" value="982"/>
</dbReference>
<dbReference type="STRING" id="7955.ENSDARP00000133222"/>
<dbReference type="iPTMnet" id="Q7SYJ9"/>
<dbReference type="PaxDb" id="7955-ENSDARP00000015486"/>
<dbReference type="GeneID" id="394100"/>
<dbReference type="KEGG" id="dre:394100"/>
<dbReference type="AGR" id="ZFIN:ZDB-GENE-040426-1632"/>
<dbReference type="CTD" id="9552"/>
<dbReference type="ZFIN" id="ZDB-GENE-040426-1632">
    <property type="gene designation" value="spag7"/>
</dbReference>
<dbReference type="eggNOG" id="ENOG502QW1E">
    <property type="taxonomic scope" value="Eukaryota"/>
</dbReference>
<dbReference type="InParanoid" id="Q7SYJ9"/>
<dbReference type="OrthoDB" id="5979509at2759"/>
<dbReference type="PhylomeDB" id="Q7SYJ9"/>
<dbReference type="PRO" id="PR:Q7SYJ9"/>
<dbReference type="Proteomes" id="UP000000437">
    <property type="component" value="Chromosome 5"/>
</dbReference>
<dbReference type="GO" id="GO:0003676">
    <property type="term" value="F:nucleic acid binding"/>
    <property type="evidence" value="ECO:0007669"/>
    <property type="project" value="InterPro"/>
</dbReference>
<dbReference type="CDD" id="cd02636">
    <property type="entry name" value="R3H_sperm-antigen"/>
    <property type="match status" value="1"/>
</dbReference>
<dbReference type="Gene3D" id="3.30.1370.50">
    <property type="entry name" value="R3H-like domain"/>
    <property type="match status" value="1"/>
</dbReference>
<dbReference type="InterPro" id="IPR001374">
    <property type="entry name" value="R3H_dom"/>
</dbReference>
<dbReference type="InterPro" id="IPR036867">
    <property type="entry name" value="R3H_dom_sf"/>
</dbReference>
<dbReference type="InterPro" id="IPR034068">
    <property type="entry name" value="R3H_sperm-antigen"/>
</dbReference>
<dbReference type="InterPro" id="IPR017330">
    <property type="entry name" value="SPAG7"/>
</dbReference>
<dbReference type="PANTHER" id="PTHR13498">
    <property type="entry name" value="SPERM ASSOCIATED ANTIGEN 7"/>
    <property type="match status" value="1"/>
</dbReference>
<dbReference type="PANTHER" id="PTHR13498:SF3">
    <property type="entry name" value="SPERM-ASSOCIATED ANTIGEN 7"/>
    <property type="match status" value="1"/>
</dbReference>
<dbReference type="Pfam" id="PF01424">
    <property type="entry name" value="R3H"/>
    <property type="match status" value="1"/>
</dbReference>
<dbReference type="PIRSF" id="PIRSF037943">
    <property type="entry name" value="Sperm-assoc_antigen_PAG7"/>
    <property type="match status" value="1"/>
</dbReference>
<dbReference type="SMART" id="SM00393">
    <property type="entry name" value="R3H"/>
    <property type="match status" value="1"/>
</dbReference>
<dbReference type="SUPFAM" id="SSF82708">
    <property type="entry name" value="R3H domain"/>
    <property type="match status" value="1"/>
</dbReference>
<dbReference type="PROSITE" id="PS51061">
    <property type="entry name" value="R3H"/>
    <property type="match status" value="1"/>
</dbReference>
<protein>
    <recommendedName>
        <fullName>Sperm-associated antigen 7 homolog</fullName>
    </recommendedName>
</protein>
<gene>
    <name type="primary">spag7</name>
</gene>
<sequence length="230" mass="26263">MADLLGSILSSMEKPPTVHDQESRRKAREQAARLKKLEEDERRKKAEFRKKMEKEVSEFIKDSTLQKKKYNPMGKIERSILHDVAEVAGLTSFSFGEDEESRYVMLFKKEFAPSDEELEAYRKGEEWDPQKAEERRRLKEKAALEEEAASHTQKRPASPNSNYRDKYSHLIGTSAAKDAAHTLQANRAYGCVPVANKRDTRSIEEAMNEIRAKKRQKKGDEEAAGSGSSV</sequence>
<keyword id="KW-0597">Phosphoprotein</keyword>
<keyword id="KW-1185">Reference proteome</keyword>
<reference key="1">
    <citation type="submission" date="2003-07" db="EMBL/GenBank/DDBJ databases">
        <authorList>
            <consortium name="NIH - Zebrafish Gene Collection (ZGC) project"/>
        </authorList>
    </citation>
    <scope>NUCLEOTIDE SEQUENCE [LARGE SCALE MRNA]</scope>
</reference>
<reference key="2">
    <citation type="journal article" date="2008" name="J. Proteome Res.">
        <title>Online automated in vivo zebrafish phosphoproteomics: from large-scale analysis down to a single embryo.</title>
        <authorList>
            <person name="Lemeer S."/>
            <person name="Pinkse M.W.H."/>
            <person name="Mohammed S."/>
            <person name="van Breukelen B."/>
            <person name="den Hertog J."/>
            <person name="Slijper M."/>
            <person name="Heck A.J.R."/>
        </authorList>
    </citation>
    <scope>PHOSPHORYLATION [LARGE SCALE ANALYSIS] AT SER-158</scope>
    <scope>IDENTIFICATION BY MASS SPECTROMETRY</scope>
    <source>
        <tissue>Embryo</tissue>
    </source>
</reference>
<evidence type="ECO:0000255" key="1">
    <source>
        <dbReference type="PROSITE-ProRule" id="PRU00382"/>
    </source>
</evidence>
<evidence type="ECO:0000256" key="2">
    <source>
        <dbReference type="SAM" id="MobiDB-lite"/>
    </source>
</evidence>
<evidence type="ECO:0000269" key="3">
    <source>
    </source>
</evidence>